<reference key="1">
    <citation type="journal article" date="2002" name="Proc. Natl. Acad. Sci. U.S.A.">
        <title>Genome sequence of a serotype M3 strain of group A Streptococcus: phage-encoded toxins, the high-virulence phenotype, and clone emergence.</title>
        <authorList>
            <person name="Beres S.B."/>
            <person name="Sylva G.L."/>
            <person name="Barbian K.D."/>
            <person name="Lei B."/>
            <person name="Hoff J.S."/>
            <person name="Mammarella N.D."/>
            <person name="Liu M.-Y."/>
            <person name="Smoot J.C."/>
            <person name="Porcella S.F."/>
            <person name="Parkins L.D."/>
            <person name="Campbell D.S."/>
            <person name="Smith T.M."/>
            <person name="McCormick J.K."/>
            <person name="Leung D.Y.M."/>
            <person name="Schlievert P.M."/>
            <person name="Musser J.M."/>
        </authorList>
    </citation>
    <scope>NUCLEOTIDE SEQUENCE [LARGE SCALE GENOMIC DNA]</scope>
    <source>
        <strain>ATCC BAA-595 / MGAS315</strain>
    </source>
</reference>
<organism>
    <name type="scientific">Streptococcus pyogenes serotype M3 (strain ATCC BAA-595 / MGAS315)</name>
    <dbReference type="NCBI Taxonomy" id="198466"/>
    <lineage>
        <taxon>Bacteria</taxon>
        <taxon>Bacillati</taxon>
        <taxon>Bacillota</taxon>
        <taxon>Bacilli</taxon>
        <taxon>Lactobacillales</taxon>
        <taxon>Streptococcaceae</taxon>
        <taxon>Streptococcus</taxon>
    </lineage>
</organism>
<protein>
    <recommendedName>
        <fullName evidence="1">UPF0291 protein SpyM3_1470</fullName>
    </recommendedName>
</protein>
<comment type="subcellular location">
    <subcellularLocation>
        <location evidence="1">Cytoplasm</location>
    </subcellularLocation>
</comment>
<comment type="similarity">
    <text evidence="1">Belongs to the UPF0291 family.</text>
</comment>
<name>Y1470_STRP3</name>
<accession>P0DG98</accession>
<accession>P60081</accession>
<accession>Q99YI5</accession>
<sequence length="85" mass="9801">MDPKKIARINELAKKKKTVGLTGPEKVEQAKLREEYIEGYRRSVRHHIEGIKLVDEEGNDVTPEKLRQVQREKGLHGRSLDDPKS</sequence>
<dbReference type="EMBL" id="AE014074">
    <property type="protein sequence ID" value="AAM80077.1"/>
    <property type="molecule type" value="Genomic_DNA"/>
</dbReference>
<dbReference type="RefSeq" id="WP_002983550.1">
    <property type="nucleotide sequence ID" value="NC_004070.1"/>
</dbReference>
<dbReference type="SMR" id="P0DG98"/>
<dbReference type="KEGG" id="spg:SpyM3_1470"/>
<dbReference type="HOGENOM" id="CLU_173137_0_2_9"/>
<dbReference type="Proteomes" id="UP000000564">
    <property type="component" value="Chromosome"/>
</dbReference>
<dbReference type="GO" id="GO:0005737">
    <property type="term" value="C:cytoplasm"/>
    <property type="evidence" value="ECO:0007669"/>
    <property type="project" value="UniProtKB-SubCell"/>
</dbReference>
<dbReference type="Gene3D" id="1.10.287.540">
    <property type="entry name" value="Helix hairpin bin"/>
    <property type="match status" value="1"/>
</dbReference>
<dbReference type="HAMAP" id="MF_01103">
    <property type="entry name" value="UPF0291"/>
    <property type="match status" value="1"/>
</dbReference>
<dbReference type="InterPro" id="IPR009242">
    <property type="entry name" value="DUF896"/>
</dbReference>
<dbReference type="NCBIfam" id="NF002711">
    <property type="entry name" value="PRK02539.1"/>
    <property type="match status" value="1"/>
</dbReference>
<dbReference type="PANTHER" id="PTHR37300">
    <property type="entry name" value="UPF0291 PROTEIN CBO2609/CLC_2481"/>
    <property type="match status" value="1"/>
</dbReference>
<dbReference type="PANTHER" id="PTHR37300:SF1">
    <property type="entry name" value="UPF0291 PROTEIN YNZC"/>
    <property type="match status" value="1"/>
</dbReference>
<dbReference type="Pfam" id="PF05979">
    <property type="entry name" value="DUF896"/>
    <property type="match status" value="1"/>
</dbReference>
<dbReference type="SUPFAM" id="SSF158221">
    <property type="entry name" value="YnzC-like"/>
    <property type="match status" value="1"/>
</dbReference>
<proteinExistence type="inferred from homology"/>
<feature type="chain" id="PRO_0000095003" description="UPF0291 protein SpyM3_1470">
    <location>
        <begin position="1"/>
        <end position="85"/>
    </location>
</feature>
<feature type="region of interest" description="Disordered" evidence="2">
    <location>
        <begin position="62"/>
        <end position="85"/>
    </location>
</feature>
<evidence type="ECO:0000255" key="1">
    <source>
        <dbReference type="HAMAP-Rule" id="MF_01103"/>
    </source>
</evidence>
<evidence type="ECO:0000256" key="2">
    <source>
        <dbReference type="SAM" id="MobiDB-lite"/>
    </source>
</evidence>
<keyword id="KW-0963">Cytoplasm</keyword>
<gene>
    <name type="ordered locus">SpyM3_1470</name>
</gene>